<feature type="chain" id="PRO_1000023691" description="Peptide chain release factor 3">
    <location>
        <begin position="1"/>
        <end position="514"/>
    </location>
</feature>
<feature type="domain" description="tr-type G">
    <location>
        <begin position="8"/>
        <end position="268"/>
    </location>
</feature>
<feature type="binding site" evidence="1">
    <location>
        <begin position="17"/>
        <end position="24"/>
    </location>
    <ligand>
        <name>GTP</name>
        <dbReference type="ChEBI" id="CHEBI:37565"/>
    </ligand>
</feature>
<feature type="binding site" evidence="1">
    <location>
        <begin position="85"/>
        <end position="89"/>
    </location>
    <ligand>
        <name>GTP</name>
        <dbReference type="ChEBI" id="CHEBI:37565"/>
    </ligand>
</feature>
<feature type="binding site" evidence="1">
    <location>
        <begin position="139"/>
        <end position="142"/>
    </location>
    <ligand>
        <name>GTP</name>
        <dbReference type="ChEBI" id="CHEBI:37565"/>
    </ligand>
</feature>
<name>RF3_STRSV</name>
<dbReference type="EMBL" id="CP000387">
    <property type="protein sequence ID" value="ABN44134.1"/>
    <property type="molecule type" value="Genomic_DNA"/>
</dbReference>
<dbReference type="RefSeq" id="WP_011836667.1">
    <property type="nucleotide sequence ID" value="NC_009009.1"/>
</dbReference>
<dbReference type="RefSeq" id="YP_001034684.1">
    <property type="nucleotide sequence ID" value="NC_009009.1"/>
</dbReference>
<dbReference type="SMR" id="A3CLS9"/>
<dbReference type="STRING" id="388919.SSA_0698"/>
<dbReference type="KEGG" id="ssa:SSA_0698"/>
<dbReference type="PATRIC" id="fig|388919.9.peg.671"/>
<dbReference type="eggNOG" id="COG4108">
    <property type="taxonomic scope" value="Bacteria"/>
</dbReference>
<dbReference type="HOGENOM" id="CLU_002794_2_1_9"/>
<dbReference type="OrthoDB" id="9804431at2"/>
<dbReference type="Proteomes" id="UP000002148">
    <property type="component" value="Chromosome"/>
</dbReference>
<dbReference type="GO" id="GO:0005829">
    <property type="term" value="C:cytosol"/>
    <property type="evidence" value="ECO:0007669"/>
    <property type="project" value="TreeGrafter"/>
</dbReference>
<dbReference type="GO" id="GO:0005525">
    <property type="term" value="F:GTP binding"/>
    <property type="evidence" value="ECO:0007669"/>
    <property type="project" value="UniProtKB-UniRule"/>
</dbReference>
<dbReference type="GO" id="GO:0003924">
    <property type="term" value="F:GTPase activity"/>
    <property type="evidence" value="ECO:0007669"/>
    <property type="project" value="InterPro"/>
</dbReference>
<dbReference type="GO" id="GO:0016150">
    <property type="term" value="F:translation release factor activity, codon nonspecific"/>
    <property type="evidence" value="ECO:0007669"/>
    <property type="project" value="TreeGrafter"/>
</dbReference>
<dbReference type="GO" id="GO:0016149">
    <property type="term" value="F:translation release factor activity, codon specific"/>
    <property type="evidence" value="ECO:0007669"/>
    <property type="project" value="UniProtKB-UniRule"/>
</dbReference>
<dbReference type="GO" id="GO:0006449">
    <property type="term" value="P:regulation of translational termination"/>
    <property type="evidence" value="ECO:0007669"/>
    <property type="project" value="UniProtKB-UniRule"/>
</dbReference>
<dbReference type="CDD" id="cd04169">
    <property type="entry name" value="RF3"/>
    <property type="match status" value="1"/>
</dbReference>
<dbReference type="CDD" id="cd16259">
    <property type="entry name" value="RF3_III"/>
    <property type="match status" value="1"/>
</dbReference>
<dbReference type="FunFam" id="2.40.30.10:FF:000040">
    <property type="entry name" value="Peptide chain release factor 3"/>
    <property type="match status" value="1"/>
</dbReference>
<dbReference type="FunFam" id="3.30.70.3280:FF:000001">
    <property type="entry name" value="Peptide chain release factor 3"/>
    <property type="match status" value="1"/>
</dbReference>
<dbReference type="FunFam" id="3.40.50.300:FF:000542">
    <property type="entry name" value="Peptide chain release factor 3"/>
    <property type="match status" value="1"/>
</dbReference>
<dbReference type="Gene3D" id="3.40.50.300">
    <property type="entry name" value="P-loop containing nucleotide triphosphate hydrolases"/>
    <property type="match status" value="1"/>
</dbReference>
<dbReference type="Gene3D" id="3.30.70.3280">
    <property type="entry name" value="Peptide chain release factor 3, domain III"/>
    <property type="match status" value="1"/>
</dbReference>
<dbReference type="Gene3D" id="2.40.30.10">
    <property type="entry name" value="Translation factors"/>
    <property type="match status" value="1"/>
</dbReference>
<dbReference type="HAMAP" id="MF_00072">
    <property type="entry name" value="Rel_fac_3"/>
    <property type="match status" value="1"/>
</dbReference>
<dbReference type="InterPro" id="IPR053905">
    <property type="entry name" value="EF-G-like_DII"/>
</dbReference>
<dbReference type="InterPro" id="IPR035647">
    <property type="entry name" value="EFG_III/V"/>
</dbReference>
<dbReference type="InterPro" id="IPR031157">
    <property type="entry name" value="G_TR_CS"/>
</dbReference>
<dbReference type="InterPro" id="IPR027417">
    <property type="entry name" value="P-loop_NTPase"/>
</dbReference>
<dbReference type="InterPro" id="IPR004548">
    <property type="entry name" value="PrfC"/>
</dbReference>
<dbReference type="InterPro" id="IPR032090">
    <property type="entry name" value="RF3_C"/>
</dbReference>
<dbReference type="InterPro" id="IPR038467">
    <property type="entry name" value="RF3_dom_3_sf"/>
</dbReference>
<dbReference type="InterPro" id="IPR041732">
    <property type="entry name" value="RF3_GTP-bd"/>
</dbReference>
<dbReference type="InterPro" id="IPR005225">
    <property type="entry name" value="Small_GTP-bd"/>
</dbReference>
<dbReference type="InterPro" id="IPR000795">
    <property type="entry name" value="T_Tr_GTP-bd_dom"/>
</dbReference>
<dbReference type="InterPro" id="IPR009000">
    <property type="entry name" value="Transl_B-barrel_sf"/>
</dbReference>
<dbReference type="NCBIfam" id="TIGR00503">
    <property type="entry name" value="prfC"/>
    <property type="match status" value="1"/>
</dbReference>
<dbReference type="NCBIfam" id="NF001964">
    <property type="entry name" value="PRK00741.1"/>
    <property type="match status" value="1"/>
</dbReference>
<dbReference type="NCBIfam" id="TIGR00231">
    <property type="entry name" value="small_GTP"/>
    <property type="match status" value="1"/>
</dbReference>
<dbReference type="PANTHER" id="PTHR43556">
    <property type="entry name" value="PEPTIDE CHAIN RELEASE FACTOR RF3"/>
    <property type="match status" value="1"/>
</dbReference>
<dbReference type="PANTHER" id="PTHR43556:SF2">
    <property type="entry name" value="PEPTIDE CHAIN RELEASE FACTOR RF3"/>
    <property type="match status" value="1"/>
</dbReference>
<dbReference type="Pfam" id="PF22042">
    <property type="entry name" value="EF-G_D2"/>
    <property type="match status" value="1"/>
</dbReference>
<dbReference type="Pfam" id="PF00009">
    <property type="entry name" value="GTP_EFTU"/>
    <property type="match status" value="1"/>
</dbReference>
<dbReference type="Pfam" id="PF16658">
    <property type="entry name" value="RF3_C"/>
    <property type="match status" value="1"/>
</dbReference>
<dbReference type="PRINTS" id="PR00315">
    <property type="entry name" value="ELONGATNFCT"/>
</dbReference>
<dbReference type="PRINTS" id="PR01037">
    <property type="entry name" value="TCRTETOQM"/>
</dbReference>
<dbReference type="SUPFAM" id="SSF54980">
    <property type="entry name" value="EF-G C-terminal domain-like"/>
    <property type="match status" value="1"/>
</dbReference>
<dbReference type="SUPFAM" id="SSF52540">
    <property type="entry name" value="P-loop containing nucleoside triphosphate hydrolases"/>
    <property type="match status" value="1"/>
</dbReference>
<dbReference type="SUPFAM" id="SSF50447">
    <property type="entry name" value="Translation proteins"/>
    <property type="match status" value="1"/>
</dbReference>
<dbReference type="PROSITE" id="PS00301">
    <property type="entry name" value="G_TR_1"/>
    <property type="match status" value="1"/>
</dbReference>
<dbReference type="PROSITE" id="PS51722">
    <property type="entry name" value="G_TR_2"/>
    <property type="match status" value="1"/>
</dbReference>
<organism>
    <name type="scientific">Streptococcus sanguinis (strain SK36)</name>
    <dbReference type="NCBI Taxonomy" id="388919"/>
    <lineage>
        <taxon>Bacteria</taxon>
        <taxon>Bacillati</taxon>
        <taxon>Bacillota</taxon>
        <taxon>Bacilli</taxon>
        <taxon>Lactobacillales</taxon>
        <taxon>Streptococcaceae</taxon>
        <taxon>Streptococcus</taxon>
    </lineage>
</organism>
<comment type="function">
    <text evidence="1">Increases the formation of ribosomal termination complexes and stimulates activities of RF-1 and RF-2. It binds guanine nucleotides and has strong preference for UGA stop codons. It may interact directly with the ribosome. The stimulation of RF-1 and RF-2 is significantly reduced by GTP and GDP, but not by GMP.</text>
</comment>
<comment type="subcellular location">
    <subcellularLocation>
        <location evidence="1">Cytoplasm</location>
    </subcellularLocation>
</comment>
<comment type="similarity">
    <text evidence="1">Belongs to the TRAFAC class translation factor GTPase superfamily. Classic translation factor GTPase family. PrfC subfamily.</text>
</comment>
<proteinExistence type="inferred from homology"/>
<evidence type="ECO:0000255" key="1">
    <source>
        <dbReference type="HAMAP-Rule" id="MF_00072"/>
    </source>
</evidence>
<gene>
    <name evidence="1" type="primary">prfC</name>
    <name type="ordered locus">SSA_0698</name>
</gene>
<accession>A3CLS9</accession>
<keyword id="KW-0963">Cytoplasm</keyword>
<keyword id="KW-0342">GTP-binding</keyword>
<keyword id="KW-0547">Nucleotide-binding</keyword>
<keyword id="KW-0648">Protein biosynthesis</keyword>
<keyword id="KW-1185">Reference proteome</keyword>
<sequence length="514" mass="58555">MTLQEEIKKRRTFAIISHPDAGKTTITEQLLYFGGEIREAGTVKGKKTGNFAKSDWMDIEKQRGISVTSSVMQFDYDGKRVNILDTPGHEDFSEDTYRTLMAVDAAVMVIDSAKGIEAQTKKLFEVVKHRNIPVFTFMNKLDRDGREPLDLLEELEEILGIASYPMNWPIGMGKSFEGLYDLYNERLELYKGEERFATLAEGDQLFASNPFYEQVKEDIELLSEAGNEFSEEAILEGKLTPVFFGSALTNFGVQTFLETFLKFAPEPHGHKKTDGEVVEPLSPDFSGFVFKIQANMDPRHRDRIAFVRIVSGEFERGMSVNLPRTSKSAKLSNVTQFMAESRENVTNAVAGDIIGVYDTGTYQVGDTLTVGKNKFEFEPLPTFTPEIFMKVSAKNVMKQKSFHKGIEQLVQEGAIQLYTNYQTGEYMLGAVGQLQFEVFKHRMENEYNAEVVMNPMGKKTVRWISPDDLDERMSSSRNILAKDRFDQPVFLFENDFALRWFADKYPDVKLEEKM</sequence>
<protein>
    <recommendedName>
        <fullName evidence="1">Peptide chain release factor 3</fullName>
        <shortName evidence="1">RF-3</shortName>
    </recommendedName>
</protein>
<reference key="1">
    <citation type="journal article" date="2007" name="J. Bacteriol.">
        <title>Genome of the opportunistic pathogen Streptococcus sanguinis.</title>
        <authorList>
            <person name="Xu P."/>
            <person name="Alves J.M."/>
            <person name="Kitten T."/>
            <person name="Brown A."/>
            <person name="Chen Z."/>
            <person name="Ozaki L.S."/>
            <person name="Manque P."/>
            <person name="Ge X."/>
            <person name="Serrano M.G."/>
            <person name="Puiu D."/>
            <person name="Hendricks S."/>
            <person name="Wang Y."/>
            <person name="Chaplin M.D."/>
            <person name="Akan D."/>
            <person name="Paik S."/>
            <person name="Peterson D.L."/>
            <person name="Macrina F.L."/>
            <person name="Buck G.A."/>
        </authorList>
    </citation>
    <scope>NUCLEOTIDE SEQUENCE [LARGE SCALE GENOMIC DNA]</scope>
    <source>
        <strain>SK36</strain>
    </source>
</reference>